<sequence>MKLHELKPSEGSRKERNRVGRGTGSGNGKTSGRGHKGQKARSGGGVRLGFEGGQLPLFRRIPKRGFTNINRKEFAIVNLDVLNRFEDGTEVTPELLVETGIIRNEKSGIKILSNGNIEKKLTVKANKFSAAAKEAIEAAGGKTEVI</sequence>
<protein>
    <recommendedName>
        <fullName evidence="1">Large ribosomal subunit protein uL15</fullName>
    </recommendedName>
    <alternativeName>
        <fullName evidence="3">50S ribosomal protein L15</fullName>
    </alternativeName>
</protein>
<reference key="1">
    <citation type="journal article" date="2012" name="BMC Genomics">
        <title>Comparative genomics and transcriptomics of lineages I, II, and III strains of Listeria monocytogenes.</title>
        <authorList>
            <person name="Hain T."/>
            <person name="Ghai R."/>
            <person name="Billion A."/>
            <person name="Kuenne C.T."/>
            <person name="Steinweg C."/>
            <person name="Izar B."/>
            <person name="Mohamed W."/>
            <person name="Mraheil M."/>
            <person name="Domann E."/>
            <person name="Schaffrath S."/>
            <person name="Karst U."/>
            <person name="Goesmann A."/>
            <person name="Oehm S."/>
            <person name="Puhler A."/>
            <person name="Merkl R."/>
            <person name="Vorwerk S."/>
            <person name="Glaser P."/>
            <person name="Garrido P."/>
            <person name="Rusniok C."/>
            <person name="Buchrieser C."/>
            <person name="Goebel W."/>
            <person name="Chakraborty T."/>
        </authorList>
    </citation>
    <scope>NUCLEOTIDE SEQUENCE [LARGE SCALE GENOMIC DNA]</scope>
    <source>
        <strain>CLIP80459</strain>
    </source>
</reference>
<gene>
    <name evidence="1" type="primary">rplO</name>
    <name type="ordered locus">Lm4b_02580</name>
</gene>
<evidence type="ECO:0000255" key="1">
    <source>
        <dbReference type="HAMAP-Rule" id="MF_01341"/>
    </source>
</evidence>
<evidence type="ECO:0000256" key="2">
    <source>
        <dbReference type="SAM" id="MobiDB-lite"/>
    </source>
</evidence>
<evidence type="ECO:0000305" key="3"/>
<dbReference type="EMBL" id="FM242711">
    <property type="protein sequence ID" value="CAS06334.1"/>
    <property type="molecule type" value="Genomic_DNA"/>
</dbReference>
<dbReference type="RefSeq" id="WP_003723680.1">
    <property type="nucleotide sequence ID" value="NC_012488.1"/>
</dbReference>
<dbReference type="SMR" id="C1KZG1"/>
<dbReference type="GeneID" id="93240494"/>
<dbReference type="KEGG" id="lmc:Lm4b_02580"/>
<dbReference type="HOGENOM" id="CLU_055188_4_2_9"/>
<dbReference type="GO" id="GO:0022625">
    <property type="term" value="C:cytosolic large ribosomal subunit"/>
    <property type="evidence" value="ECO:0007669"/>
    <property type="project" value="TreeGrafter"/>
</dbReference>
<dbReference type="GO" id="GO:0019843">
    <property type="term" value="F:rRNA binding"/>
    <property type="evidence" value="ECO:0007669"/>
    <property type="project" value="UniProtKB-UniRule"/>
</dbReference>
<dbReference type="GO" id="GO:0003735">
    <property type="term" value="F:structural constituent of ribosome"/>
    <property type="evidence" value="ECO:0007669"/>
    <property type="project" value="InterPro"/>
</dbReference>
<dbReference type="GO" id="GO:0006412">
    <property type="term" value="P:translation"/>
    <property type="evidence" value="ECO:0007669"/>
    <property type="project" value="UniProtKB-UniRule"/>
</dbReference>
<dbReference type="FunFam" id="3.100.10.10:FF:000004">
    <property type="entry name" value="50S ribosomal protein L15"/>
    <property type="match status" value="1"/>
</dbReference>
<dbReference type="Gene3D" id="3.100.10.10">
    <property type="match status" value="1"/>
</dbReference>
<dbReference type="HAMAP" id="MF_01341">
    <property type="entry name" value="Ribosomal_uL15"/>
    <property type="match status" value="1"/>
</dbReference>
<dbReference type="InterPro" id="IPR030878">
    <property type="entry name" value="Ribosomal_uL15"/>
</dbReference>
<dbReference type="InterPro" id="IPR021131">
    <property type="entry name" value="Ribosomal_uL15/eL18"/>
</dbReference>
<dbReference type="InterPro" id="IPR036227">
    <property type="entry name" value="Ribosomal_uL15/eL18_sf"/>
</dbReference>
<dbReference type="InterPro" id="IPR005749">
    <property type="entry name" value="Ribosomal_uL15_bac-type"/>
</dbReference>
<dbReference type="InterPro" id="IPR001196">
    <property type="entry name" value="Ribosomal_uL15_CS"/>
</dbReference>
<dbReference type="NCBIfam" id="TIGR01071">
    <property type="entry name" value="rplO_bact"/>
    <property type="match status" value="1"/>
</dbReference>
<dbReference type="PANTHER" id="PTHR12934">
    <property type="entry name" value="50S RIBOSOMAL PROTEIN L15"/>
    <property type="match status" value="1"/>
</dbReference>
<dbReference type="PANTHER" id="PTHR12934:SF11">
    <property type="entry name" value="LARGE RIBOSOMAL SUBUNIT PROTEIN UL15M"/>
    <property type="match status" value="1"/>
</dbReference>
<dbReference type="Pfam" id="PF00828">
    <property type="entry name" value="Ribosomal_L27A"/>
    <property type="match status" value="1"/>
</dbReference>
<dbReference type="SUPFAM" id="SSF52080">
    <property type="entry name" value="Ribosomal proteins L15p and L18e"/>
    <property type="match status" value="1"/>
</dbReference>
<dbReference type="PROSITE" id="PS00475">
    <property type="entry name" value="RIBOSOMAL_L15"/>
    <property type="match status" value="1"/>
</dbReference>
<name>RL15_LISMC</name>
<proteinExistence type="inferred from homology"/>
<comment type="function">
    <text evidence="1">Binds to the 23S rRNA.</text>
</comment>
<comment type="subunit">
    <text evidence="1">Part of the 50S ribosomal subunit.</text>
</comment>
<comment type="similarity">
    <text evidence="1">Belongs to the universal ribosomal protein uL15 family.</text>
</comment>
<organism>
    <name type="scientific">Listeria monocytogenes serotype 4b (strain CLIP80459)</name>
    <dbReference type="NCBI Taxonomy" id="568819"/>
    <lineage>
        <taxon>Bacteria</taxon>
        <taxon>Bacillati</taxon>
        <taxon>Bacillota</taxon>
        <taxon>Bacilli</taxon>
        <taxon>Bacillales</taxon>
        <taxon>Listeriaceae</taxon>
        <taxon>Listeria</taxon>
    </lineage>
</organism>
<accession>C1KZG1</accession>
<keyword id="KW-0687">Ribonucleoprotein</keyword>
<keyword id="KW-0689">Ribosomal protein</keyword>
<keyword id="KW-0694">RNA-binding</keyword>
<keyword id="KW-0699">rRNA-binding</keyword>
<feature type="chain" id="PRO_1000214710" description="Large ribosomal subunit protein uL15">
    <location>
        <begin position="1"/>
        <end position="146"/>
    </location>
</feature>
<feature type="region of interest" description="Disordered" evidence="2">
    <location>
        <begin position="1"/>
        <end position="50"/>
    </location>
</feature>
<feature type="compositionally biased region" description="Basic and acidic residues" evidence="2">
    <location>
        <begin position="1"/>
        <end position="18"/>
    </location>
</feature>
<feature type="compositionally biased region" description="Gly residues" evidence="2">
    <location>
        <begin position="21"/>
        <end position="31"/>
    </location>
</feature>